<name>SSRA_RAT</name>
<feature type="signal peptide" evidence="3">
    <location>
        <begin position="1"/>
        <end position="21"/>
    </location>
</feature>
<feature type="chain" id="PRO_0000033285" description="Translocon-associated protein subunit alpha">
    <location>
        <begin position="22"/>
        <end position="319"/>
    </location>
</feature>
<feature type="topological domain" description="Lumenal" evidence="3">
    <location>
        <begin position="22"/>
        <end position="208"/>
    </location>
</feature>
<feature type="transmembrane region" description="Helical" evidence="3">
    <location>
        <begin position="209"/>
        <end position="229"/>
    </location>
</feature>
<feature type="topological domain" description="Cytoplasmic" evidence="3">
    <location>
        <begin position="230"/>
        <end position="319"/>
    </location>
</feature>
<feature type="region of interest" description="Disordered" evidence="4">
    <location>
        <begin position="35"/>
        <end position="84"/>
    </location>
</feature>
<feature type="compositionally biased region" description="Acidic residues" evidence="4">
    <location>
        <begin position="35"/>
        <end position="76"/>
    </location>
</feature>
<feature type="modified residue" description="Phosphoserine" evidence="2">
    <location>
        <position position="248"/>
    </location>
</feature>
<feature type="modified residue" description="Phosphothreonine" evidence="2">
    <location>
        <position position="261"/>
    </location>
</feature>
<feature type="glycosylation site" description="N-linked (GlcNAc...) asparagine" evidence="3">
    <location>
        <position position="137"/>
    </location>
</feature>
<feature type="glycosylation site" description="N-linked (GlcNAc...) asparagine" evidence="3">
    <location>
        <position position="192"/>
    </location>
</feature>
<evidence type="ECO:0000250" key="1"/>
<evidence type="ECO:0000250" key="2">
    <source>
        <dbReference type="UniProtKB" id="P43307"/>
    </source>
</evidence>
<evidence type="ECO:0000255" key="3"/>
<evidence type="ECO:0000256" key="4">
    <source>
        <dbReference type="SAM" id="MobiDB-lite"/>
    </source>
</evidence>
<evidence type="ECO:0000305" key="5"/>
<proteinExistence type="evidence at protein level"/>
<gene>
    <name type="primary">Ssr1</name>
    <name type="ORF">Ac2-238</name>
</gene>
<reference key="1">
    <citation type="submission" date="2003-06" db="EMBL/GenBank/DDBJ databases">
        <title>Liver regeneration after PH.</title>
        <authorList>
            <person name="Xu C.S."/>
            <person name="Li W.Q."/>
            <person name="Li Y.C."/>
            <person name="Wang G.P."/>
            <person name="Chai L.Q."/>
            <person name="Yuan J.Y."/>
            <person name="Yang K.J."/>
            <person name="Yan H.M."/>
            <person name="Chang C.F."/>
            <person name="Zhao L.F."/>
            <person name="Ma H."/>
            <person name="Wang L."/>
            <person name="Wang S.F."/>
            <person name="Han H.P."/>
            <person name="Shi J.B."/>
            <person name="Rahman S."/>
            <person name="Wang Q.N."/>
            <person name="Zhang J.B."/>
        </authorList>
    </citation>
    <scope>NUCLEOTIDE SEQUENCE [LARGE SCALE MRNA]</scope>
    <source>
        <tissue>Liver</tissue>
    </source>
</reference>
<reference key="2">
    <citation type="journal article" date="2012" name="Nat. Commun.">
        <title>Quantitative maps of protein phosphorylation sites across 14 different rat organs and tissues.</title>
        <authorList>
            <person name="Lundby A."/>
            <person name="Secher A."/>
            <person name="Lage K."/>
            <person name="Nordsborg N.B."/>
            <person name="Dmytriyev A."/>
            <person name="Lundby C."/>
            <person name="Olsen J.V."/>
        </authorList>
    </citation>
    <scope>IDENTIFICATION BY MASS SPECTROMETRY [LARGE SCALE ANALYSIS]</scope>
</reference>
<protein>
    <recommendedName>
        <fullName>Translocon-associated protein subunit alpha</fullName>
        <shortName>TRAP-alpha</shortName>
    </recommendedName>
    <alternativeName>
        <fullName>Liver regeneration-related protein LRRG137</fullName>
    </alternativeName>
    <alternativeName>
        <fullName>Signal sequence receptor subunit alpha</fullName>
        <shortName>SSR-alpha</shortName>
    </alternativeName>
</protein>
<dbReference type="EMBL" id="AY321345">
    <property type="protein sequence ID" value="AAP86277.1"/>
    <property type="molecule type" value="mRNA"/>
</dbReference>
<dbReference type="SMR" id="Q7TPJ0"/>
<dbReference type="FunCoup" id="Q7TPJ0">
    <property type="interactions" value="3255"/>
</dbReference>
<dbReference type="IntAct" id="Q7TPJ0">
    <property type="interactions" value="1"/>
</dbReference>
<dbReference type="STRING" id="10116.ENSRNOP00000070389"/>
<dbReference type="GlyCosmos" id="Q7TPJ0">
    <property type="glycosylation" value="2 sites, No reported glycans"/>
</dbReference>
<dbReference type="GlyGen" id="Q7TPJ0">
    <property type="glycosylation" value="2 sites"/>
</dbReference>
<dbReference type="jPOST" id="Q7TPJ0"/>
<dbReference type="PaxDb" id="10116-ENSRNOP00000019040"/>
<dbReference type="Ensembl" id="ENSRNOT00000089736.2">
    <property type="protein sequence ID" value="ENSRNOP00000070167.2"/>
    <property type="gene ID" value="ENSRNOG00000014165.8"/>
</dbReference>
<dbReference type="UCSC" id="RGD:1310961">
    <property type="organism name" value="rat"/>
</dbReference>
<dbReference type="AGR" id="RGD:1310961"/>
<dbReference type="RGD" id="1310961">
    <property type="gene designation" value="Ssr1"/>
</dbReference>
<dbReference type="eggNOG" id="KOG1631">
    <property type="taxonomic scope" value="Eukaryota"/>
</dbReference>
<dbReference type="GeneTree" id="ENSGT00400000022103"/>
<dbReference type="InParanoid" id="Q7TPJ0"/>
<dbReference type="OrthoDB" id="1926781at2759"/>
<dbReference type="PhylomeDB" id="Q7TPJ0"/>
<dbReference type="TreeFam" id="TF321074"/>
<dbReference type="PRO" id="PR:Q7TPJ0"/>
<dbReference type="Proteomes" id="UP000002494">
    <property type="component" value="Chromosome 17"/>
</dbReference>
<dbReference type="GO" id="GO:0005783">
    <property type="term" value="C:endoplasmic reticulum"/>
    <property type="evidence" value="ECO:0000266"/>
    <property type="project" value="RGD"/>
</dbReference>
<dbReference type="GO" id="GO:0005789">
    <property type="term" value="C:endoplasmic reticulum membrane"/>
    <property type="evidence" value="ECO:0007669"/>
    <property type="project" value="UniProtKB-SubCell"/>
</dbReference>
<dbReference type="InterPro" id="IPR005595">
    <property type="entry name" value="TRAP_alpha"/>
</dbReference>
<dbReference type="PANTHER" id="PTHR12924:SF0">
    <property type="entry name" value="TRANSLOCON-ASSOCIATED PROTEIN SUBUNIT ALPHA"/>
    <property type="match status" value="1"/>
</dbReference>
<dbReference type="PANTHER" id="PTHR12924">
    <property type="entry name" value="TRANSLOCON-ASSOCIATED PROTEIN, ALPHA SUBUNIT"/>
    <property type="match status" value="1"/>
</dbReference>
<dbReference type="Pfam" id="PF03896">
    <property type="entry name" value="TRAP_alpha"/>
    <property type="match status" value="1"/>
</dbReference>
<accession>Q7TPJ0</accession>
<sequence>MRLLPRLLLLFLLAFPAAVLLRGGPGGSLAVAQDLTEDEETVEDPIIEDEDDEAEVEEDEPTDLAEEKEEEEDVSSEPEASPSADTTILFVKGEDFPANNIVKFLVGFTNKGTEDFIVESLDASFRYPQDYQFYIQNFTALPLNTIVPPQRQATFEYSFIPAEPMGGRPFGLVINLNYKDLNGNVFQDAVFNQTVTVIEREDGLDGETIFMYMFLAGLGLLVVVGLHQLLESRKRKRPIQKVEMGTSSQNDVDMSWIPQETLNQISAGRERHTEVTLQLHRPVVSDASYACFSCFRKLPRPATLAAWTSSLRQLAVCGI</sequence>
<organism>
    <name type="scientific">Rattus norvegicus</name>
    <name type="common">Rat</name>
    <dbReference type="NCBI Taxonomy" id="10116"/>
    <lineage>
        <taxon>Eukaryota</taxon>
        <taxon>Metazoa</taxon>
        <taxon>Chordata</taxon>
        <taxon>Craniata</taxon>
        <taxon>Vertebrata</taxon>
        <taxon>Euteleostomi</taxon>
        <taxon>Mammalia</taxon>
        <taxon>Eutheria</taxon>
        <taxon>Euarchontoglires</taxon>
        <taxon>Glires</taxon>
        <taxon>Rodentia</taxon>
        <taxon>Myomorpha</taxon>
        <taxon>Muroidea</taxon>
        <taxon>Muridae</taxon>
        <taxon>Murinae</taxon>
        <taxon>Rattus</taxon>
    </lineage>
</organism>
<keyword id="KW-0106">Calcium</keyword>
<keyword id="KW-0256">Endoplasmic reticulum</keyword>
<keyword id="KW-0325">Glycoprotein</keyword>
<keyword id="KW-0472">Membrane</keyword>
<keyword id="KW-0597">Phosphoprotein</keyword>
<keyword id="KW-1185">Reference proteome</keyword>
<keyword id="KW-0732">Signal</keyword>
<keyword id="KW-0812">Transmembrane</keyword>
<keyword id="KW-1133">Transmembrane helix</keyword>
<comment type="function">
    <text evidence="1">TRAP proteins are part of a complex whose function is to bind calcium to the ER membrane and thereby regulate the retention of ER resident proteins. May be involved in the recycling of the translocation apparatus after completion of the translocation process or may function as a membrane-bound chaperone facilitating folding of translocated proteins (By similarity).</text>
</comment>
<comment type="subunit">
    <text evidence="1">Heterotetramer of TRAP-alpha, TRAP-beta, TRAP-delta and TRAP-gamma. Interacts with palmitoylated calnexin (CALX), the interaction is required for efficient folding of glycosylated proteins (By similarity).</text>
</comment>
<comment type="subcellular location">
    <subcellularLocation>
        <location evidence="1">Endoplasmic reticulum membrane</location>
        <topology evidence="1">Single-pass type I membrane protein</topology>
    </subcellularLocation>
</comment>
<comment type="miscellaneous">
    <text evidence="1">Seems to bind calcium.</text>
</comment>
<comment type="similarity">
    <text evidence="5">Belongs to the TRAP-alpha family.</text>
</comment>